<accession>P68368</accession>
<accession>P05215</accession>
<accession>Q3TY31</accession>
<proteinExistence type="evidence at protein level"/>
<name>TBA4A_MOUSE</name>
<evidence type="ECO:0000250" key="1">
    <source>
        <dbReference type="UniProtKB" id="P68363"/>
    </source>
</evidence>
<evidence type="ECO:0000250" key="2">
    <source>
        <dbReference type="UniProtKB" id="P68366"/>
    </source>
</evidence>
<evidence type="ECO:0000250" key="3">
    <source>
        <dbReference type="UniProtKB" id="Q5XIF6"/>
    </source>
</evidence>
<evidence type="ECO:0000250" key="4">
    <source>
        <dbReference type="UniProtKB" id="Q71U36"/>
    </source>
</evidence>
<evidence type="ECO:0000250" key="5">
    <source>
        <dbReference type="UniProtKB" id="Q9BQE3"/>
    </source>
</evidence>
<evidence type="ECO:0000269" key="6">
    <source>
    </source>
</evidence>
<evidence type="ECO:0000269" key="7">
    <source>
    </source>
</evidence>
<evidence type="ECO:0000269" key="8">
    <source>
    </source>
</evidence>
<evidence type="ECO:0000269" key="9">
    <source>
    </source>
</evidence>
<evidence type="ECO:0000269" key="10">
    <source>
    </source>
</evidence>
<evidence type="ECO:0000305" key="11"/>
<evidence type="ECO:0007744" key="12">
    <source>
    </source>
</evidence>
<dbReference type="EC" id="3.6.5.-" evidence="1"/>
<dbReference type="EMBL" id="M13444">
    <property type="protein sequence ID" value="AAA40502.1"/>
    <property type="molecule type" value="mRNA"/>
</dbReference>
<dbReference type="EMBL" id="AK002427">
    <property type="protein sequence ID" value="BAB22094.1"/>
    <property type="molecule type" value="mRNA"/>
</dbReference>
<dbReference type="EMBL" id="AK078355">
    <property type="protein sequence ID" value="BAC37234.1"/>
    <property type="molecule type" value="mRNA"/>
</dbReference>
<dbReference type="EMBL" id="AK158934">
    <property type="protein sequence ID" value="BAE34732.1"/>
    <property type="status" value="ALT_INIT"/>
    <property type="molecule type" value="mRNA"/>
</dbReference>
<dbReference type="EMBL" id="BC019959">
    <property type="protein sequence ID" value="AAH19959.1"/>
    <property type="molecule type" value="mRNA"/>
</dbReference>
<dbReference type="CCDS" id="CCDS35623.1"/>
<dbReference type="PIR" id="I77427">
    <property type="entry name" value="I77427"/>
</dbReference>
<dbReference type="RefSeq" id="NP_033473.1">
    <property type="nucleotide sequence ID" value="NM_009447.5"/>
</dbReference>
<dbReference type="PDB" id="8IXF">
    <property type="method" value="EM"/>
    <property type="resolution" value="4.40 A"/>
    <property type="chains" value="A/B/C/D/E/F/G/H/I=1-448"/>
</dbReference>
<dbReference type="PDB" id="8IXG">
    <property type="method" value="EM"/>
    <property type="resolution" value="4.40 A"/>
    <property type="chains" value="B/H/J/K=1-448"/>
</dbReference>
<dbReference type="PDBsum" id="8IXF"/>
<dbReference type="PDBsum" id="8IXG"/>
<dbReference type="EMDB" id="EMD-35792"/>
<dbReference type="SMR" id="P68368"/>
<dbReference type="BioGRID" id="204375">
    <property type="interactions" value="53"/>
</dbReference>
<dbReference type="FunCoup" id="P68368">
    <property type="interactions" value="1121"/>
</dbReference>
<dbReference type="IntAct" id="P68368">
    <property type="interactions" value="17"/>
</dbReference>
<dbReference type="MINT" id="P68368"/>
<dbReference type="STRING" id="10090.ENSMUSP00000140657"/>
<dbReference type="CarbonylDB" id="P68368"/>
<dbReference type="GlyGen" id="P68368">
    <property type="glycosylation" value="3 sites, 1 O-linked glycan (3 sites)"/>
</dbReference>
<dbReference type="iPTMnet" id="P68368"/>
<dbReference type="MetOSite" id="P68368"/>
<dbReference type="PhosphoSitePlus" id="P68368"/>
<dbReference type="SwissPalm" id="P68368"/>
<dbReference type="jPOST" id="P68368"/>
<dbReference type="PaxDb" id="10090-ENSMUSP00000140657"/>
<dbReference type="PeptideAtlas" id="P68368"/>
<dbReference type="ProteomicsDB" id="262937"/>
<dbReference type="Pumba" id="P68368"/>
<dbReference type="Antibodypedia" id="3138">
    <property type="antibodies" value="509 antibodies from 38 providers"/>
</dbReference>
<dbReference type="DNASU" id="22145"/>
<dbReference type="Ensembl" id="ENSMUST00000186213.7">
    <property type="protein sequence ID" value="ENSMUSP00000140657.2"/>
    <property type="gene ID" value="ENSMUSG00000026202.14"/>
</dbReference>
<dbReference type="GeneID" id="22145"/>
<dbReference type="KEGG" id="mmu:22145"/>
<dbReference type="UCSC" id="uc007bok.1">
    <property type="organism name" value="mouse"/>
</dbReference>
<dbReference type="AGR" id="MGI:1095410"/>
<dbReference type="CTD" id="7277"/>
<dbReference type="MGI" id="MGI:1095410">
    <property type="gene designation" value="Tuba4a"/>
</dbReference>
<dbReference type="VEuPathDB" id="HostDB:ENSMUSG00000026202"/>
<dbReference type="eggNOG" id="KOG1376">
    <property type="taxonomic scope" value="Eukaryota"/>
</dbReference>
<dbReference type="GeneTree" id="ENSGT00950000183165"/>
<dbReference type="HOGENOM" id="CLU_015718_0_0_1"/>
<dbReference type="InParanoid" id="P68368"/>
<dbReference type="OMA" id="RRVTDNC"/>
<dbReference type="OrthoDB" id="17919at9989"/>
<dbReference type="PhylomeDB" id="P68368"/>
<dbReference type="TreeFam" id="TF300314"/>
<dbReference type="Reactome" id="R-MMU-114608">
    <property type="pathway name" value="Platelet degranulation"/>
</dbReference>
<dbReference type="Reactome" id="R-MMU-190840">
    <property type="pathway name" value="Microtubule-dependent trafficking of connexons from Golgi to the plasma membrane"/>
</dbReference>
<dbReference type="Reactome" id="R-MMU-2132295">
    <property type="pathway name" value="MHC class II antigen presentation"/>
</dbReference>
<dbReference type="Reactome" id="R-MMU-2467813">
    <property type="pathway name" value="Separation of Sister Chromatids"/>
</dbReference>
<dbReference type="Reactome" id="R-MMU-2500257">
    <property type="pathway name" value="Resolution of Sister Chromatid Cohesion"/>
</dbReference>
<dbReference type="Reactome" id="R-MMU-2565942">
    <property type="pathway name" value="Regulation of PLK1 Activity at G2/M Transition"/>
</dbReference>
<dbReference type="Reactome" id="R-MMU-3371497">
    <property type="pathway name" value="HSP90 chaperone cycle for steroid hormone receptors (SHR) in the presence of ligand"/>
</dbReference>
<dbReference type="Reactome" id="R-MMU-380259">
    <property type="pathway name" value="Loss of Nlp from mitotic centrosomes"/>
</dbReference>
<dbReference type="Reactome" id="R-MMU-380270">
    <property type="pathway name" value="Recruitment of mitotic centrosome proteins and complexes"/>
</dbReference>
<dbReference type="Reactome" id="R-MMU-380284">
    <property type="pathway name" value="Loss of proteins required for interphase microtubule organization from the centrosome"/>
</dbReference>
<dbReference type="Reactome" id="R-MMU-380320">
    <property type="pathway name" value="Recruitment of NuMA to mitotic centrosomes"/>
</dbReference>
<dbReference type="Reactome" id="R-MMU-437239">
    <property type="pathway name" value="Recycling pathway of L1"/>
</dbReference>
<dbReference type="Reactome" id="R-MMU-5610787">
    <property type="pathway name" value="Hedgehog 'off' state"/>
</dbReference>
<dbReference type="Reactome" id="R-MMU-5617833">
    <property type="pathway name" value="Cilium Assembly"/>
</dbReference>
<dbReference type="Reactome" id="R-MMU-5620912">
    <property type="pathway name" value="Anchoring of the basal body to the plasma membrane"/>
</dbReference>
<dbReference type="Reactome" id="R-MMU-5620924">
    <property type="pathway name" value="Intraflagellar transport"/>
</dbReference>
<dbReference type="Reactome" id="R-MMU-5626467">
    <property type="pathway name" value="RHO GTPases activate IQGAPs"/>
</dbReference>
<dbReference type="Reactome" id="R-MMU-5663220">
    <property type="pathway name" value="RHO GTPases Activate Formins"/>
</dbReference>
<dbReference type="Reactome" id="R-MMU-6807878">
    <property type="pathway name" value="COPI-mediated anterograde transport"/>
</dbReference>
<dbReference type="Reactome" id="R-MMU-6811434">
    <property type="pathway name" value="COPI-dependent Golgi-to-ER retrograde traffic"/>
</dbReference>
<dbReference type="Reactome" id="R-MMU-6811436">
    <property type="pathway name" value="COPI-independent Golgi-to-ER retrograde traffic"/>
</dbReference>
<dbReference type="Reactome" id="R-MMU-68877">
    <property type="pathway name" value="Mitotic Prometaphase"/>
</dbReference>
<dbReference type="Reactome" id="R-MMU-8852276">
    <property type="pathway name" value="The role of GTSE1 in G2/M progression after G2 checkpoint"/>
</dbReference>
<dbReference type="Reactome" id="R-MMU-8854518">
    <property type="pathway name" value="AURKA Activation by TPX2"/>
</dbReference>
<dbReference type="Reactome" id="R-MMU-8955332">
    <property type="pathway name" value="Carboxyterminal post-translational modifications of tubulin"/>
</dbReference>
<dbReference type="Reactome" id="R-MMU-9646399">
    <property type="pathway name" value="Aggrephagy"/>
</dbReference>
<dbReference type="Reactome" id="R-MMU-9648025">
    <property type="pathway name" value="EML4 and NUDC in mitotic spindle formation"/>
</dbReference>
<dbReference type="Reactome" id="R-MMU-9668328">
    <property type="pathway name" value="Sealing of the nuclear envelope (NE) by ESCRT-III"/>
</dbReference>
<dbReference type="Reactome" id="R-MMU-983189">
    <property type="pathway name" value="Kinesins"/>
</dbReference>
<dbReference type="Reactome" id="R-MMU-9833482">
    <property type="pathway name" value="PKR-mediated signaling"/>
</dbReference>
<dbReference type="BioGRID-ORCS" id="22145">
    <property type="hits" value="2 hits in 78 CRISPR screens"/>
</dbReference>
<dbReference type="ChiTaRS" id="Tuba4a">
    <property type="organism name" value="mouse"/>
</dbReference>
<dbReference type="PRO" id="PR:P68368"/>
<dbReference type="Proteomes" id="UP000000589">
    <property type="component" value="Chromosome 1"/>
</dbReference>
<dbReference type="RNAct" id="P68368">
    <property type="molecule type" value="protein"/>
</dbReference>
<dbReference type="Bgee" id="ENSMUSG00000026202">
    <property type="expression patterns" value="Expressed in motor neuron and 253 other cell types or tissues"/>
</dbReference>
<dbReference type="ExpressionAtlas" id="P68368">
    <property type="expression patterns" value="baseline and differential"/>
</dbReference>
<dbReference type="GO" id="GO:0005929">
    <property type="term" value="C:cilium"/>
    <property type="evidence" value="ECO:0007669"/>
    <property type="project" value="Ensembl"/>
</dbReference>
<dbReference type="GO" id="GO:0005737">
    <property type="term" value="C:cytoplasm"/>
    <property type="evidence" value="ECO:0007669"/>
    <property type="project" value="UniProtKB-KW"/>
</dbReference>
<dbReference type="GO" id="GO:0005874">
    <property type="term" value="C:microtubule"/>
    <property type="evidence" value="ECO:0007669"/>
    <property type="project" value="UniProtKB-KW"/>
</dbReference>
<dbReference type="GO" id="GO:0019899">
    <property type="term" value="F:enzyme binding"/>
    <property type="evidence" value="ECO:0000353"/>
    <property type="project" value="UniProtKB"/>
</dbReference>
<dbReference type="GO" id="GO:0005525">
    <property type="term" value="F:GTP binding"/>
    <property type="evidence" value="ECO:0007669"/>
    <property type="project" value="UniProtKB-KW"/>
</dbReference>
<dbReference type="GO" id="GO:0016787">
    <property type="term" value="F:hydrolase activity"/>
    <property type="evidence" value="ECO:0007669"/>
    <property type="project" value="UniProtKB-KW"/>
</dbReference>
<dbReference type="GO" id="GO:0046872">
    <property type="term" value="F:metal ion binding"/>
    <property type="evidence" value="ECO:0007669"/>
    <property type="project" value="UniProtKB-KW"/>
</dbReference>
<dbReference type="GO" id="GO:0019901">
    <property type="term" value="F:protein kinase binding"/>
    <property type="evidence" value="ECO:0007669"/>
    <property type="project" value="Ensembl"/>
</dbReference>
<dbReference type="GO" id="GO:0005200">
    <property type="term" value="F:structural constituent of cytoskeleton"/>
    <property type="evidence" value="ECO:0007669"/>
    <property type="project" value="InterPro"/>
</dbReference>
<dbReference type="GO" id="GO:0007017">
    <property type="term" value="P:microtubule-based process"/>
    <property type="evidence" value="ECO:0007669"/>
    <property type="project" value="InterPro"/>
</dbReference>
<dbReference type="CDD" id="cd02186">
    <property type="entry name" value="alpha_tubulin"/>
    <property type="match status" value="1"/>
</dbReference>
<dbReference type="FunFam" id="1.10.287.600:FF:000005">
    <property type="entry name" value="Tubulin alpha chain"/>
    <property type="match status" value="1"/>
</dbReference>
<dbReference type="FunFam" id="3.30.1330.20:FF:000001">
    <property type="entry name" value="Tubulin alpha chain"/>
    <property type="match status" value="1"/>
</dbReference>
<dbReference type="FunFam" id="3.40.50.1440:FF:000002">
    <property type="entry name" value="Tubulin alpha chain"/>
    <property type="match status" value="1"/>
</dbReference>
<dbReference type="Gene3D" id="1.10.287.600">
    <property type="entry name" value="Helix hairpin bin"/>
    <property type="match status" value="1"/>
</dbReference>
<dbReference type="Gene3D" id="3.30.1330.20">
    <property type="entry name" value="Tubulin/FtsZ, C-terminal domain"/>
    <property type="match status" value="1"/>
</dbReference>
<dbReference type="Gene3D" id="3.40.50.1440">
    <property type="entry name" value="Tubulin/FtsZ, GTPase domain"/>
    <property type="match status" value="1"/>
</dbReference>
<dbReference type="InterPro" id="IPR002452">
    <property type="entry name" value="Alpha_tubulin"/>
</dbReference>
<dbReference type="InterPro" id="IPR008280">
    <property type="entry name" value="Tub_FtsZ_C"/>
</dbReference>
<dbReference type="InterPro" id="IPR000217">
    <property type="entry name" value="Tubulin"/>
</dbReference>
<dbReference type="InterPro" id="IPR037103">
    <property type="entry name" value="Tubulin/FtsZ-like_C"/>
</dbReference>
<dbReference type="InterPro" id="IPR018316">
    <property type="entry name" value="Tubulin/FtsZ_2-layer-sand-dom"/>
</dbReference>
<dbReference type="InterPro" id="IPR036525">
    <property type="entry name" value="Tubulin/FtsZ_GTPase_sf"/>
</dbReference>
<dbReference type="InterPro" id="IPR023123">
    <property type="entry name" value="Tubulin_C"/>
</dbReference>
<dbReference type="InterPro" id="IPR017975">
    <property type="entry name" value="Tubulin_CS"/>
</dbReference>
<dbReference type="InterPro" id="IPR003008">
    <property type="entry name" value="Tubulin_FtsZ_GTPase"/>
</dbReference>
<dbReference type="PANTHER" id="PTHR11588">
    <property type="entry name" value="TUBULIN"/>
    <property type="match status" value="1"/>
</dbReference>
<dbReference type="Pfam" id="PF00091">
    <property type="entry name" value="Tubulin"/>
    <property type="match status" value="1"/>
</dbReference>
<dbReference type="Pfam" id="PF03953">
    <property type="entry name" value="Tubulin_C"/>
    <property type="match status" value="1"/>
</dbReference>
<dbReference type="PRINTS" id="PR01162">
    <property type="entry name" value="ALPHATUBULIN"/>
</dbReference>
<dbReference type="PRINTS" id="PR01161">
    <property type="entry name" value="TUBULIN"/>
</dbReference>
<dbReference type="SMART" id="SM00864">
    <property type="entry name" value="Tubulin"/>
    <property type="match status" value="1"/>
</dbReference>
<dbReference type="SMART" id="SM00865">
    <property type="entry name" value="Tubulin_C"/>
    <property type="match status" value="1"/>
</dbReference>
<dbReference type="SUPFAM" id="SSF55307">
    <property type="entry name" value="Tubulin C-terminal domain-like"/>
    <property type="match status" value="1"/>
</dbReference>
<dbReference type="SUPFAM" id="SSF52490">
    <property type="entry name" value="Tubulin nucleotide-binding domain-like"/>
    <property type="match status" value="1"/>
</dbReference>
<dbReference type="PROSITE" id="PS00227">
    <property type="entry name" value="TUBULIN"/>
    <property type="match status" value="1"/>
</dbReference>
<keyword id="KW-0002">3D-structure</keyword>
<keyword id="KW-0007">Acetylation</keyword>
<keyword id="KW-0963">Cytoplasm</keyword>
<keyword id="KW-0206">Cytoskeleton</keyword>
<keyword id="KW-0903">Direct protein sequencing</keyword>
<keyword id="KW-0342">GTP-binding</keyword>
<keyword id="KW-0378">Hydrolase</keyword>
<keyword id="KW-0460">Magnesium</keyword>
<keyword id="KW-0479">Metal-binding</keyword>
<keyword id="KW-0488">Methylation</keyword>
<keyword id="KW-0493">Microtubule</keyword>
<keyword id="KW-0944">Nitration</keyword>
<keyword id="KW-0547">Nucleotide-binding</keyword>
<keyword id="KW-0597">Phosphoprotein</keyword>
<keyword id="KW-1185">Reference proteome</keyword>
<organism>
    <name type="scientific">Mus musculus</name>
    <name type="common">Mouse</name>
    <dbReference type="NCBI Taxonomy" id="10090"/>
    <lineage>
        <taxon>Eukaryota</taxon>
        <taxon>Metazoa</taxon>
        <taxon>Chordata</taxon>
        <taxon>Craniata</taxon>
        <taxon>Vertebrata</taxon>
        <taxon>Euteleostomi</taxon>
        <taxon>Mammalia</taxon>
        <taxon>Eutheria</taxon>
        <taxon>Euarchontoglires</taxon>
        <taxon>Glires</taxon>
        <taxon>Rodentia</taxon>
        <taxon>Myomorpha</taxon>
        <taxon>Muroidea</taxon>
        <taxon>Muridae</taxon>
        <taxon>Murinae</taxon>
        <taxon>Mus</taxon>
        <taxon>Mus</taxon>
    </lineage>
</organism>
<protein>
    <recommendedName>
        <fullName>Tubulin alpha-4A chain</fullName>
        <ecNumber evidence="1">3.6.5.-</ecNumber>
    </recommendedName>
    <alternativeName>
        <fullName>Alpha-tubulin 4</fullName>
    </alternativeName>
    <alternativeName>
        <fullName>Alpha-tubulin isotype M-alpha-4</fullName>
    </alternativeName>
    <alternativeName>
        <fullName>Tubulin alpha-4 chain</fullName>
    </alternativeName>
</protein>
<gene>
    <name type="primary">Tuba4a</name>
    <name type="synonym">Tuba4</name>
</gene>
<reference key="1">
    <citation type="journal article" date="1986" name="Mol. Cell. Biol.">
        <title>Six mouse alpha-tubulin mRNAs encode five distinct isotypes: testis-specific expression of two sister genes.</title>
        <authorList>
            <person name="Villasante A."/>
            <person name="Wang D."/>
            <person name="Dobner P."/>
            <person name="Dolph P."/>
            <person name="Lewis S.A."/>
            <person name="Cowan N.J."/>
        </authorList>
    </citation>
    <scope>NUCLEOTIDE SEQUENCE [MRNA]</scope>
</reference>
<reference key="2">
    <citation type="journal article" date="2005" name="Science">
        <title>The transcriptional landscape of the mammalian genome.</title>
        <authorList>
            <person name="Carninci P."/>
            <person name="Kasukawa T."/>
            <person name="Katayama S."/>
            <person name="Gough J."/>
            <person name="Frith M.C."/>
            <person name="Maeda N."/>
            <person name="Oyama R."/>
            <person name="Ravasi T."/>
            <person name="Lenhard B."/>
            <person name="Wells C."/>
            <person name="Kodzius R."/>
            <person name="Shimokawa K."/>
            <person name="Bajic V.B."/>
            <person name="Brenner S.E."/>
            <person name="Batalov S."/>
            <person name="Forrest A.R."/>
            <person name="Zavolan M."/>
            <person name="Davis M.J."/>
            <person name="Wilming L.G."/>
            <person name="Aidinis V."/>
            <person name="Allen J.E."/>
            <person name="Ambesi-Impiombato A."/>
            <person name="Apweiler R."/>
            <person name="Aturaliya R.N."/>
            <person name="Bailey T.L."/>
            <person name="Bansal M."/>
            <person name="Baxter L."/>
            <person name="Beisel K.W."/>
            <person name="Bersano T."/>
            <person name="Bono H."/>
            <person name="Chalk A.M."/>
            <person name="Chiu K.P."/>
            <person name="Choudhary V."/>
            <person name="Christoffels A."/>
            <person name="Clutterbuck D.R."/>
            <person name="Crowe M.L."/>
            <person name="Dalla E."/>
            <person name="Dalrymple B.P."/>
            <person name="de Bono B."/>
            <person name="Della Gatta G."/>
            <person name="di Bernardo D."/>
            <person name="Down T."/>
            <person name="Engstrom P."/>
            <person name="Fagiolini M."/>
            <person name="Faulkner G."/>
            <person name="Fletcher C.F."/>
            <person name="Fukushima T."/>
            <person name="Furuno M."/>
            <person name="Futaki S."/>
            <person name="Gariboldi M."/>
            <person name="Georgii-Hemming P."/>
            <person name="Gingeras T.R."/>
            <person name="Gojobori T."/>
            <person name="Green R.E."/>
            <person name="Gustincich S."/>
            <person name="Harbers M."/>
            <person name="Hayashi Y."/>
            <person name="Hensch T.K."/>
            <person name="Hirokawa N."/>
            <person name="Hill D."/>
            <person name="Huminiecki L."/>
            <person name="Iacono M."/>
            <person name="Ikeo K."/>
            <person name="Iwama A."/>
            <person name="Ishikawa T."/>
            <person name="Jakt M."/>
            <person name="Kanapin A."/>
            <person name="Katoh M."/>
            <person name="Kawasawa Y."/>
            <person name="Kelso J."/>
            <person name="Kitamura H."/>
            <person name="Kitano H."/>
            <person name="Kollias G."/>
            <person name="Krishnan S.P."/>
            <person name="Kruger A."/>
            <person name="Kummerfeld S.K."/>
            <person name="Kurochkin I.V."/>
            <person name="Lareau L.F."/>
            <person name="Lazarevic D."/>
            <person name="Lipovich L."/>
            <person name="Liu J."/>
            <person name="Liuni S."/>
            <person name="McWilliam S."/>
            <person name="Madan Babu M."/>
            <person name="Madera M."/>
            <person name="Marchionni L."/>
            <person name="Matsuda H."/>
            <person name="Matsuzawa S."/>
            <person name="Miki H."/>
            <person name="Mignone F."/>
            <person name="Miyake S."/>
            <person name="Morris K."/>
            <person name="Mottagui-Tabar S."/>
            <person name="Mulder N."/>
            <person name="Nakano N."/>
            <person name="Nakauchi H."/>
            <person name="Ng P."/>
            <person name="Nilsson R."/>
            <person name="Nishiguchi S."/>
            <person name="Nishikawa S."/>
            <person name="Nori F."/>
            <person name="Ohara O."/>
            <person name="Okazaki Y."/>
            <person name="Orlando V."/>
            <person name="Pang K.C."/>
            <person name="Pavan W.J."/>
            <person name="Pavesi G."/>
            <person name="Pesole G."/>
            <person name="Petrovsky N."/>
            <person name="Piazza S."/>
            <person name="Reed J."/>
            <person name="Reid J.F."/>
            <person name="Ring B.Z."/>
            <person name="Ringwald M."/>
            <person name="Rost B."/>
            <person name="Ruan Y."/>
            <person name="Salzberg S.L."/>
            <person name="Sandelin A."/>
            <person name="Schneider C."/>
            <person name="Schoenbach C."/>
            <person name="Sekiguchi K."/>
            <person name="Semple C.A."/>
            <person name="Seno S."/>
            <person name="Sessa L."/>
            <person name="Sheng Y."/>
            <person name="Shibata Y."/>
            <person name="Shimada H."/>
            <person name="Shimada K."/>
            <person name="Silva D."/>
            <person name="Sinclair B."/>
            <person name="Sperling S."/>
            <person name="Stupka E."/>
            <person name="Sugiura K."/>
            <person name="Sultana R."/>
            <person name="Takenaka Y."/>
            <person name="Taki K."/>
            <person name="Tammoja K."/>
            <person name="Tan S.L."/>
            <person name="Tang S."/>
            <person name="Taylor M.S."/>
            <person name="Tegner J."/>
            <person name="Teichmann S.A."/>
            <person name="Ueda H.R."/>
            <person name="van Nimwegen E."/>
            <person name="Verardo R."/>
            <person name="Wei C.L."/>
            <person name="Yagi K."/>
            <person name="Yamanishi H."/>
            <person name="Zabarovsky E."/>
            <person name="Zhu S."/>
            <person name="Zimmer A."/>
            <person name="Hide W."/>
            <person name="Bult C."/>
            <person name="Grimmond S.M."/>
            <person name="Teasdale R.D."/>
            <person name="Liu E.T."/>
            <person name="Brusic V."/>
            <person name="Quackenbush J."/>
            <person name="Wahlestedt C."/>
            <person name="Mattick J.S."/>
            <person name="Hume D.A."/>
            <person name="Kai C."/>
            <person name="Sasaki D."/>
            <person name="Tomaru Y."/>
            <person name="Fukuda S."/>
            <person name="Kanamori-Katayama M."/>
            <person name="Suzuki M."/>
            <person name="Aoki J."/>
            <person name="Arakawa T."/>
            <person name="Iida J."/>
            <person name="Imamura K."/>
            <person name="Itoh M."/>
            <person name="Kato T."/>
            <person name="Kawaji H."/>
            <person name="Kawagashira N."/>
            <person name="Kawashima T."/>
            <person name="Kojima M."/>
            <person name="Kondo S."/>
            <person name="Konno H."/>
            <person name="Nakano K."/>
            <person name="Ninomiya N."/>
            <person name="Nishio T."/>
            <person name="Okada M."/>
            <person name="Plessy C."/>
            <person name="Shibata K."/>
            <person name="Shiraki T."/>
            <person name="Suzuki S."/>
            <person name="Tagami M."/>
            <person name="Waki K."/>
            <person name="Watahiki A."/>
            <person name="Okamura-Oho Y."/>
            <person name="Suzuki H."/>
            <person name="Kawai J."/>
            <person name="Hayashizaki Y."/>
        </authorList>
    </citation>
    <scope>NUCLEOTIDE SEQUENCE [LARGE SCALE MRNA]</scope>
    <source>
        <strain>C57BL/6J</strain>
        <tissue>Cerebellum</tissue>
        <tissue>Kidney</tissue>
        <tissue>Visual cortex</tissue>
    </source>
</reference>
<reference key="3">
    <citation type="journal article" date="2004" name="Genome Res.">
        <title>The status, quality, and expansion of the NIH full-length cDNA project: the Mammalian Gene Collection (MGC).</title>
        <authorList>
            <consortium name="The MGC Project Team"/>
        </authorList>
    </citation>
    <scope>NUCLEOTIDE SEQUENCE [LARGE SCALE MRNA]</scope>
    <source>
        <strain>FVB/N</strain>
        <tissue>Mammary tumor</tissue>
    </source>
</reference>
<reference key="4">
    <citation type="submission" date="2009-01" db="UniProtKB">
        <authorList>
            <person name="Lubec G."/>
            <person name="Klug S."/>
            <person name="Kang S.U."/>
            <person name="Sunyer B."/>
            <person name="Chen W.-Q."/>
        </authorList>
    </citation>
    <scope>PROTEIN SEQUENCE OF 65-79; 85-121; 157-163; 216-304; 312-320; 327-336; 340-370; 374-390; 395-401 AND 403-430</scope>
    <scope>IDENTIFICATION BY MASS SPECTROMETRY</scope>
    <source>
        <strain>C57BL/6J</strain>
        <strain>OF1</strain>
        <tissue>Brain</tissue>
        <tissue>Hippocampus</tissue>
    </source>
</reference>
<reference key="5">
    <citation type="journal article" date="2005" name="Science">
        <title>Tubulin polyglutamylase enzymes are members of the TTL domain protein family.</title>
        <authorList>
            <person name="Janke C."/>
            <person name="Rogowski K."/>
            <person name="Wloga D."/>
            <person name="Regnard C."/>
            <person name="Kajava A.V."/>
            <person name="Strub J.-M."/>
            <person name="Temurak N."/>
            <person name="van Dijk J."/>
            <person name="Boucher D."/>
            <person name="van Dorsselaer A."/>
            <person name="Suryavanshi S."/>
            <person name="Gaertig J."/>
            <person name="Edde B."/>
        </authorList>
    </citation>
    <scope>GLUTAMYLATION</scope>
</reference>
<reference key="6">
    <citation type="journal article" date="2006" name="Biochemistry">
        <title>Endogenously nitrated proteins in mouse brain: links to neurodegenerative disease.</title>
        <authorList>
            <person name="Sacksteder C.A."/>
            <person name="Qian W.-J."/>
            <person name="Knyushko T.V."/>
            <person name="Wang H."/>
            <person name="Chin M.H."/>
            <person name="Lacan G."/>
            <person name="Melega W.P."/>
            <person name="Camp D.G. II"/>
            <person name="Smith R.D."/>
            <person name="Smith D.J."/>
            <person name="Squier T.C."/>
            <person name="Bigelow D.J."/>
        </authorList>
    </citation>
    <scope>NITRATION [LARGE SCALE ANALYSIS] AT TYR-83</scope>
    <scope>IDENTIFICATION BY MASS SPECTROMETRY [LARGE SCALE ANALYSIS]</scope>
    <source>
        <tissue>Brain</tissue>
    </source>
</reference>
<reference key="7">
    <citation type="journal article" date="2009" name="Cell">
        <title>Evolutionary divergence of enzymatic mechanisms for posttranslational polyglycylation.</title>
        <authorList>
            <person name="Rogowski K."/>
            <person name="Juge F."/>
            <person name="van Dijk J."/>
            <person name="Wloga D."/>
            <person name="Strub J.-M."/>
            <person name="Levilliers N."/>
            <person name="Thomas D."/>
            <person name="Bre M.-H."/>
            <person name="Van Dorsselaer A."/>
            <person name="Gaertig J."/>
            <person name="Janke C."/>
        </authorList>
    </citation>
    <scope>GLYCYLATION</scope>
</reference>
<reference key="8">
    <citation type="journal article" date="2010" name="Cell">
        <title>A tissue-specific atlas of mouse protein phosphorylation and expression.</title>
        <authorList>
            <person name="Huttlin E.L."/>
            <person name="Jedrychowski M.P."/>
            <person name="Elias J.E."/>
            <person name="Goswami T."/>
            <person name="Rad R."/>
            <person name="Beausoleil S.A."/>
            <person name="Villen J."/>
            <person name="Haas W."/>
            <person name="Sowa M.E."/>
            <person name="Gygi S.P."/>
        </authorList>
    </citation>
    <scope>IDENTIFICATION BY MASS SPECTROMETRY [LARGE SCALE ANALYSIS]</scope>
    <source>
        <tissue>Brain</tissue>
        <tissue>Brown adipose tissue</tissue>
        <tissue>Heart</tissue>
        <tissue>Kidney</tissue>
        <tissue>Liver</tissue>
        <tissue>Lung</tissue>
        <tissue>Pancreas</tissue>
        <tissue>Spleen</tissue>
        <tissue>Testis</tissue>
    </source>
</reference>
<reference key="9">
    <citation type="journal article" date="2013" name="J. Cell Biol.">
        <title>Tubulin glycylases and glutamylases have distinct functions in stabilization and motility of ependymal cilia.</title>
        <authorList>
            <person name="Bosch Grau M."/>
            <person name="Gonzalez Curto G."/>
            <person name="Rocha C."/>
            <person name="Magiera M.M."/>
            <person name="Marques Sousa P."/>
            <person name="Giordano T."/>
            <person name="Spassky N."/>
            <person name="Janke C."/>
        </authorList>
    </citation>
    <scope>GLYCYLATION</scope>
    <scope>GLUTAMYLATION</scope>
</reference>
<reference key="10">
    <citation type="journal article" date="2016" name="Development">
        <title>CFAP157 is a murine downstream effector of FOXJ1 that is specifically required for flagellum morphogenesis and sperm motility.</title>
        <authorList>
            <person name="Weidemann M."/>
            <person name="Schuster-Gossler K."/>
            <person name="Stauber M."/>
            <person name="Wrede C."/>
            <person name="Hegermann J."/>
            <person name="Ott T."/>
            <person name="Boldt K."/>
            <person name="Beyer T."/>
            <person name="Serth K."/>
            <person name="Kremmer E."/>
            <person name="Blum M."/>
            <person name="Ueffing M."/>
            <person name="Gossler A."/>
        </authorList>
    </citation>
    <scope>INTERACTION WITH CFAP157</scope>
</reference>
<reference key="11">
    <citation type="journal article" date="2021" name="Science">
        <title>Tubulin glycylation controls axonemal dynein activity, flagellar beat, and male fertility.</title>
        <authorList>
            <person name="Gadadhar S."/>
            <person name="Alvarez Viar G."/>
            <person name="Hansen J.N."/>
            <person name="Gong A."/>
            <person name="Kostarev A."/>
            <person name="Ialy-Radio C."/>
            <person name="Leboucher S."/>
            <person name="Whitfield M."/>
            <person name="Ziyyat A."/>
            <person name="Toure A."/>
            <person name="Alvarez L."/>
            <person name="Pigino G."/>
            <person name="Janke C."/>
        </authorList>
    </citation>
    <scope>GLYCYLATION</scope>
</reference>
<comment type="function">
    <text>Tubulin is the major constituent of microtubules, a cylinder consisting of laterally associated linear protofilaments composed of alpha- and beta-tubulin heterodimers. Microtubules grow by the addition of GTP-tubulin dimers to the microtubule end, where a stabilizing cap forms. Below the cap, tubulin dimers are in GDP-bound state, owing to GTPase activity of alpha-tubulin.</text>
</comment>
<comment type="catalytic activity">
    <reaction evidence="1">
        <text>GTP + H2O = GDP + phosphate + H(+)</text>
        <dbReference type="Rhea" id="RHEA:19669"/>
        <dbReference type="ChEBI" id="CHEBI:15377"/>
        <dbReference type="ChEBI" id="CHEBI:15378"/>
        <dbReference type="ChEBI" id="CHEBI:37565"/>
        <dbReference type="ChEBI" id="CHEBI:43474"/>
        <dbReference type="ChEBI" id="CHEBI:58189"/>
    </reaction>
    <physiologicalReaction direction="left-to-right" evidence="1">
        <dbReference type="Rhea" id="RHEA:19670"/>
    </physiologicalReaction>
</comment>
<comment type="cofactor">
    <cofactor evidence="1">
        <name>Mg(2+)</name>
        <dbReference type="ChEBI" id="CHEBI:18420"/>
    </cofactor>
</comment>
<comment type="subunit">
    <text evidence="9">Dimer of alpha and beta chains. A typical microtubule is a hollow water-filled tube with an outer diameter of 25 nm and an inner diameter of 15 nM. Alpha-beta heterodimers associate head-to-tail to form protofilaments running lengthwise along the microtubule wall with the beta-tubulin subunit facing the microtubule plus end conferring a structural polarity. Microtubules usually have 13 protofilaments but different protofilament numbers can be found in some organisms and specialized cells. Interacts with CFAP157 (PubMed:27965440).</text>
</comment>
<comment type="subcellular location">
    <subcellularLocation>
        <location>Cytoplasm</location>
        <location>Cytoskeleton</location>
    </subcellularLocation>
</comment>
<comment type="domain">
    <text evidence="1">The MREC motif may be critical for tubulin autoregulation.</text>
</comment>
<comment type="PTM">
    <text evidence="7 8 10">Some glutamate residues at the C-terminus are polyglycylated, resulting in polyglycine chains on the gamma-carboxyl group. Glycylation is mainly limited to tubulin incorporated into axonemes (cilia and flagella) whereas glutamylation is prevalent in neuronal cells, centrioles, axonemes, and the mitotic spindle. Both modifications can coexist on the same protein on adjacent residues, and lowering polyglycylation levels increases polyglutamylation, and reciprocally. Cilia and flagella glycylation is required for their stability and maintenance. Flagella glycylation controls sperm motility (PubMed:33414192).</text>
</comment>
<comment type="PTM">
    <text evidence="4 6 8">Some glutamate residues at the C-terminus are polyglutamylated, resulting in polyglutamate chains on the gamma-carboxyl group (PubMed:15890843). Polyglutamylation plays a key role in microtubule severing by spastin (SPAST). SPAST preferentially recognizes and acts on microtubules decorated with short polyglutamate tails: severing activity by SPAST increases as the number of glutamates per tubulin rises from one to eight, but decreases beyond this glutamylation threshold (By similarity). Glutamylation is also involved in cilia motility (PubMed:23897886).</text>
</comment>
<comment type="PTM">
    <text evidence="4">Acetylation of alpha chains at Lys-40 is located inside the microtubule lumen. This modification has been correlated with increased microtubule stability, intracellular transport and ciliary assembly.</text>
</comment>
<comment type="PTM">
    <text evidence="1">Methylation of alpha chains at Lys-40 is found in mitotic microtubules and is required for normal mitosis and cytokinesis contributing to genomic stability.</text>
</comment>
<comment type="PTM">
    <text evidence="2">Although this tubulin does not encode a C-terminal tyrosine, a C-terminal tyrosine can be added post-translationally by the tubulin tyrosine ligase (TTL). It can then undergo a detyrosination cycle by the tubulin tyrosine carboxypeptidase (MATCAP1/KIAA0895L).</text>
</comment>
<comment type="miscellaneous">
    <text>This tubulin does not have a C-terminal tyrosine.</text>
</comment>
<comment type="similarity">
    <text evidence="11">Belongs to the tubulin family.</text>
</comment>
<comment type="sequence caution" evidence="11">
    <conflict type="erroneous initiation">
        <sequence resource="EMBL-CDS" id="BAE34732"/>
    </conflict>
</comment>
<sequence>MRECISVHVGQAGVQMGNACWELYCLEHGIQPDGQMPSDKTIGGGDDSFTTFFCETGAGKHVPRAVFVDLEPTVIDEIRNGPYRQLFHPEQLITGKEDAANNYARGHYTIGKEIIDPVLDRIRKLSDQCTGLQGFLVFHSFGGGTGSGFTSLLMERLSVDYGKKSKLEFSIYPAPQVSTAVVEPYNSILTTHTTLEHSDCAFMVDNEAIYDICRRNLDIERPTYTNLNRLISQIVSSITASLRFDGALNVDLTEFQTNLVPYPRIHFPLATYAPVISAEKAYHEQLSVAEITNACFEPANQMVKCDPRHGKYMACCLLYRGDVVPKDVNAAIAAIKTKRSIQFVDWCPTGFKVGINYQPPTVVPGGDLAKVQRAVCMLSNTTAIAEAWARLDHKFDLMYAKRAFVHWYVGEGMEEGEFSEAREDMAALEKDYEEVGIDSYEDEDEGEE</sequence>
<feature type="chain" id="PRO_0000048123" description="Tubulin alpha-4A chain">
    <location>
        <begin position="1"/>
        <end position="448"/>
    </location>
</feature>
<feature type="short sequence motif" description="MREC motif" evidence="1">
    <location>
        <begin position="1"/>
        <end position="4"/>
    </location>
</feature>
<feature type="active site" evidence="1">
    <location>
        <position position="254"/>
    </location>
</feature>
<feature type="binding site" evidence="1">
    <location>
        <position position="11"/>
    </location>
    <ligand>
        <name>GTP</name>
        <dbReference type="ChEBI" id="CHEBI:37565"/>
    </ligand>
</feature>
<feature type="binding site" evidence="1">
    <location>
        <position position="71"/>
    </location>
    <ligand>
        <name>GTP</name>
        <dbReference type="ChEBI" id="CHEBI:37565"/>
    </ligand>
</feature>
<feature type="binding site" evidence="1">
    <location>
        <position position="71"/>
    </location>
    <ligand>
        <name>Mg(2+)</name>
        <dbReference type="ChEBI" id="CHEBI:18420"/>
    </ligand>
</feature>
<feature type="binding site" evidence="1">
    <location>
        <position position="140"/>
    </location>
    <ligand>
        <name>GTP</name>
        <dbReference type="ChEBI" id="CHEBI:37565"/>
    </ligand>
</feature>
<feature type="binding site" evidence="1">
    <location>
        <position position="144"/>
    </location>
    <ligand>
        <name>GTP</name>
        <dbReference type="ChEBI" id="CHEBI:37565"/>
    </ligand>
</feature>
<feature type="binding site" evidence="1">
    <location>
        <position position="145"/>
    </location>
    <ligand>
        <name>GTP</name>
        <dbReference type="ChEBI" id="CHEBI:37565"/>
    </ligand>
</feature>
<feature type="binding site" evidence="1">
    <location>
        <position position="179"/>
    </location>
    <ligand>
        <name>GTP</name>
        <dbReference type="ChEBI" id="CHEBI:37565"/>
    </ligand>
</feature>
<feature type="binding site" evidence="1">
    <location>
        <position position="206"/>
    </location>
    <ligand>
        <name>GTP</name>
        <dbReference type="ChEBI" id="CHEBI:37565"/>
    </ligand>
</feature>
<feature type="binding site" evidence="1">
    <location>
        <position position="228"/>
    </location>
    <ligand>
        <name>GTP</name>
        <dbReference type="ChEBI" id="CHEBI:37565"/>
    </ligand>
</feature>
<feature type="modified residue" description="N6-acetyllysine" evidence="2">
    <location>
        <position position="40"/>
    </location>
</feature>
<feature type="modified residue" description="Phosphoserine" evidence="2">
    <location>
        <position position="48"/>
    </location>
</feature>
<feature type="modified residue" description="3'-nitrotyrosine" evidence="12">
    <location>
        <position position="83"/>
    </location>
</feature>
<feature type="modified residue" description="Phosphotyrosine" evidence="5">
    <location>
        <position position="432"/>
    </location>
</feature>
<feature type="modified residue" description="Phosphoserine" evidence="3">
    <location>
        <position position="439"/>
    </location>
</feature>
<feature type="sequence conflict" description="In Ref. 2; BAE34732." evidence="11" ref="2">
    <original>M</original>
    <variation>G</variation>
    <location>
        <position position="1"/>
    </location>
</feature>